<protein>
    <recommendedName>
        <fullName evidence="1">Large ribosomal subunit protein bL12</fullName>
    </recommendedName>
    <alternativeName>
        <fullName evidence="2">50S ribosomal protein L7/L12</fullName>
    </alternativeName>
</protein>
<name>RL7_BUCCC</name>
<feature type="chain" id="PRO_1000195779" description="Large ribosomal subunit protein bL12">
    <location>
        <begin position="1"/>
        <end position="122"/>
    </location>
</feature>
<evidence type="ECO:0000255" key="1">
    <source>
        <dbReference type="HAMAP-Rule" id="MF_00368"/>
    </source>
</evidence>
<evidence type="ECO:0000305" key="2"/>
<organism>
    <name type="scientific">Buchnera aphidicola subsp. Cinara cedri (strain Cc)</name>
    <dbReference type="NCBI Taxonomy" id="372461"/>
    <lineage>
        <taxon>Bacteria</taxon>
        <taxon>Pseudomonadati</taxon>
        <taxon>Pseudomonadota</taxon>
        <taxon>Gammaproteobacteria</taxon>
        <taxon>Enterobacterales</taxon>
        <taxon>Erwiniaceae</taxon>
        <taxon>Buchnera</taxon>
    </lineage>
</organism>
<proteinExistence type="inferred from homology"/>
<dbReference type="EMBL" id="CP000263">
    <property type="protein sequence ID" value="ABJ90505.1"/>
    <property type="molecule type" value="Genomic_DNA"/>
</dbReference>
<dbReference type="RefSeq" id="WP_011672424.1">
    <property type="nucleotide sequence ID" value="NC_008513.1"/>
</dbReference>
<dbReference type="SMR" id="Q058E4"/>
<dbReference type="STRING" id="372461.BCc_020"/>
<dbReference type="KEGG" id="bcc:BCc_020"/>
<dbReference type="eggNOG" id="COG0222">
    <property type="taxonomic scope" value="Bacteria"/>
</dbReference>
<dbReference type="HOGENOM" id="CLU_086499_3_2_6"/>
<dbReference type="OrthoDB" id="9811748at2"/>
<dbReference type="Proteomes" id="UP000000669">
    <property type="component" value="Chromosome"/>
</dbReference>
<dbReference type="GO" id="GO:0022625">
    <property type="term" value="C:cytosolic large ribosomal subunit"/>
    <property type="evidence" value="ECO:0007669"/>
    <property type="project" value="TreeGrafter"/>
</dbReference>
<dbReference type="GO" id="GO:0003729">
    <property type="term" value="F:mRNA binding"/>
    <property type="evidence" value="ECO:0007669"/>
    <property type="project" value="TreeGrafter"/>
</dbReference>
<dbReference type="GO" id="GO:0003735">
    <property type="term" value="F:structural constituent of ribosome"/>
    <property type="evidence" value="ECO:0007669"/>
    <property type="project" value="InterPro"/>
</dbReference>
<dbReference type="GO" id="GO:0006412">
    <property type="term" value="P:translation"/>
    <property type="evidence" value="ECO:0007669"/>
    <property type="project" value="UniProtKB-UniRule"/>
</dbReference>
<dbReference type="CDD" id="cd00387">
    <property type="entry name" value="Ribosomal_L7_L12"/>
    <property type="match status" value="1"/>
</dbReference>
<dbReference type="FunFam" id="3.30.1390.10:FF:000001">
    <property type="entry name" value="50S ribosomal protein L7/L12"/>
    <property type="match status" value="1"/>
</dbReference>
<dbReference type="Gene3D" id="3.30.1390.10">
    <property type="match status" value="1"/>
</dbReference>
<dbReference type="Gene3D" id="1.20.5.710">
    <property type="entry name" value="Single helix bin"/>
    <property type="match status" value="1"/>
</dbReference>
<dbReference type="HAMAP" id="MF_00368">
    <property type="entry name" value="Ribosomal_bL12"/>
    <property type="match status" value="1"/>
</dbReference>
<dbReference type="InterPro" id="IPR000206">
    <property type="entry name" value="Ribosomal_bL12"/>
</dbReference>
<dbReference type="InterPro" id="IPR013823">
    <property type="entry name" value="Ribosomal_bL12_C"/>
</dbReference>
<dbReference type="InterPro" id="IPR014719">
    <property type="entry name" value="Ribosomal_bL12_C/ClpS-like"/>
</dbReference>
<dbReference type="InterPro" id="IPR008932">
    <property type="entry name" value="Ribosomal_bL12_oligo"/>
</dbReference>
<dbReference type="InterPro" id="IPR036235">
    <property type="entry name" value="Ribosomal_bL12_oligo_N_sf"/>
</dbReference>
<dbReference type="NCBIfam" id="TIGR00855">
    <property type="entry name" value="L12"/>
    <property type="match status" value="1"/>
</dbReference>
<dbReference type="PANTHER" id="PTHR45987">
    <property type="entry name" value="39S RIBOSOMAL PROTEIN L12"/>
    <property type="match status" value="1"/>
</dbReference>
<dbReference type="PANTHER" id="PTHR45987:SF4">
    <property type="entry name" value="LARGE RIBOSOMAL SUBUNIT PROTEIN BL12M"/>
    <property type="match status" value="1"/>
</dbReference>
<dbReference type="Pfam" id="PF00542">
    <property type="entry name" value="Ribosomal_L12"/>
    <property type="match status" value="1"/>
</dbReference>
<dbReference type="Pfam" id="PF16320">
    <property type="entry name" value="Ribosomal_L12_N"/>
    <property type="match status" value="1"/>
</dbReference>
<dbReference type="SUPFAM" id="SSF54736">
    <property type="entry name" value="ClpS-like"/>
    <property type="match status" value="1"/>
</dbReference>
<dbReference type="SUPFAM" id="SSF48300">
    <property type="entry name" value="Ribosomal protein L7/12, oligomerisation (N-terminal) domain"/>
    <property type="match status" value="1"/>
</dbReference>
<keyword id="KW-1185">Reference proteome</keyword>
<keyword id="KW-0687">Ribonucleoprotein</keyword>
<keyword id="KW-0689">Ribosomal protein</keyword>
<reference key="1">
    <citation type="journal article" date="2006" name="Science">
        <title>A small microbial genome: the end of a long symbiotic relationship?</title>
        <authorList>
            <person name="Perez-Brocal V."/>
            <person name="Gil R."/>
            <person name="Ramos S."/>
            <person name="Lamelas A."/>
            <person name="Postigo M."/>
            <person name="Michelena J.M."/>
            <person name="Silva F.J."/>
            <person name="Moya A."/>
            <person name="Latorre A."/>
        </authorList>
    </citation>
    <scope>NUCLEOTIDE SEQUENCE [LARGE SCALE GENOMIC DNA]</scope>
    <source>
        <strain>Cc</strain>
    </source>
</reference>
<comment type="function">
    <text evidence="1">Forms part of the ribosomal stalk which helps the ribosome interact with GTP-bound translation factors. Is thus essential for accurate translation.</text>
</comment>
<comment type="subunit">
    <text evidence="1">Homodimer. Part of the ribosomal stalk of the 50S ribosomal subunit. Forms a multimeric L10(L12)X complex, where L10 forms an elongated spine to which 2 to 4 L12 dimers bind in a sequential fashion. Binds GTP-bound translation factors.</text>
</comment>
<comment type="similarity">
    <text evidence="1">Belongs to the bacterial ribosomal protein bL12 family.</text>
</comment>
<gene>
    <name evidence="1" type="primary">rplL</name>
    <name type="ordered locus">BCc_020</name>
</gene>
<sequence length="122" mass="13413">MSITRKEILDAISEMSIKNIMKLISNIEKKFNISSNISLNSTQTIQEKVPEEKTAFTVKLNAIGPNKVAIIKIIRSTTGLGLKESKDLVESAPTIIKENINKQDAESLKKNLIDSGAEAEIT</sequence>
<accession>Q058E4</accession>